<gene>
    <name type="primary">regB</name>
    <name type="synonym">prrB</name>
    <name type="ordered locus">RHOS4_00950</name>
    <name type="ORF">RSP_1520</name>
</gene>
<dbReference type="EC" id="2.7.13.3"/>
<dbReference type="EMBL" id="U22347">
    <property type="protein sequence ID" value="AAA86723.1"/>
    <property type="molecule type" value="Genomic_DNA"/>
</dbReference>
<dbReference type="EMBL" id="CP000143">
    <property type="protein sequence ID" value="ABA77663.1"/>
    <property type="molecule type" value="Genomic_DNA"/>
</dbReference>
<dbReference type="RefSeq" id="WP_002722232.1">
    <property type="nucleotide sequence ID" value="NZ_CP030271.1"/>
</dbReference>
<dbReference type="RefSeq" id="YP_351564.1">
    <property type="nucleotide sequence ID" value="NC_007493.2"/>
</dbReference>
<dbReference type="SMR" id="Q3J6C1"/>
<dbReference type="IntAct" id="Q3J6C1">
    <property type="interactions" value="1"/>
</dbReference>
<dbReference type="MINT" id="Q3J6C1"/>
<dbReference type="STRING" id="272943.RSP_1520"/>
<dbReference type="EnsemblBacteria" id="ABA77663">
    <property type="protein sequence ID" value="ABA77663"/>
    <property type="gene ID" value="RSP_1520"/>
</dbReference>
<dbReference type="KEGG" id="rsp:RSP_1520"/>
<dbReference type="PATRIC" id="fig|272943.9.peg.393"/>
<dbReference type="eggNOG" id="COG2205">
    <property type="taxonomic scope" value="Bacteria"/>
</dbReference>
<dbReference type="OrthoDB" id="9785252at2"/>
<dbReference type="PhylomeDB" id="Q3J6C1"/>
<dbReference type="BRENDA" id="2.7.13.3">
    <property type="organism ID" value="5383"/>
</dbReference>
<dbReference type="Proteomes" id="UP000002703">
    <property type="component" value="Chromosome 1"/>
</dbReference>
<dbReference type="GO" id="GO:0005886">
    <property type="term" value="C:plasma membrane"/>
    <property type="evidence" value="ECO:0007669"/>
    <property type="project" value="UniProtKB-SubCell"/>
</dbReference>
<dbReference type="GO" id="GO:0005524">
    <property type="term" value="F:ATP binding"/>
    <property type="evidence" value="ECO:0007669"/>
    <property type="project" value="UniProtKB-KW"/>
</dbReference>
<dbReference type="GO" id="GO:0000155">
    <property type="term" value="F:phosphorelay sensor kinase activity"/>
    <property type="evidence" value="ECO:0007669"/>
    <property type="project" value="InterPro"/>
</dbReference>
<dbReference type="CDD" id="cd00082">
    <property type="entry name" value="HisKA"/>
    <property type="match status" value="1"/>
</dbReference>
<dbReference type="Gene3D" id="1.10.287.130">
    <property type="match status" value="1"/>
</dbReference>
<dbReference type="Gene3D" id="3.30.565.10">
    <property type="entry name" value="Histidine kinase-like ATPase, C-terminal domain"/>
    <property type="match status" value="1"/>
</dbReference>
<dbReference type="InterPro" id="IPR050980">
    <property type="entry name" value="2C_sensor_his_kinase"/>
</dbReference>
<dbReference type="InterPro" id="IPR036890">
    <property type="entry name" value="HATPase_C_sf"/>
</dbReference>
<dbReference type="InterPro" id="IPR005467">
    <property type="entry name" value="His_kinase_dom"/>
</dbReference>
<dbReference type="InterPro" id="IPR003661">
    <property type="entry name" value="HisK_dim/P_dom"/>
</dbReference>
<dbReference type="InterPro" id="IPR036097">
    <property type="entry name" value="HisK_dim/P_sf"/>
</dbReference>
<dbReference type="InterPro" id="IPR047770">
    <property type="entry name" value="RegB"/>
</dbReference>
<dbReference type="InterPro" id="IPR004358">
    <property type="entry name" value="Sig_transdc_His_kin-like_C"/>
</dbReference>
<dbReference type="NCBIfam" id="NF033792">
    <property type="entry name" value="ActS_PrrB_HisK"/>
    <property type="match status" value="1"/>
</dbReference>
<dbReference type="NCBIfam" id="NF045988">
    <property type="entry name" value="HisKinRegBRhodob"/>
    <property type="match status" value="1"/>
</dbReference>
<dbReference type="PANTHER" id="PTHR44936">
    <property type="entry name" value="SENSOR PROTEIN CREC"/>
    <property type="match status" value="1"/>
</dbReference>
<dbReference type="PANTHER" id="PTHR44936:SF10">
    <property type="entry name" value="SENSOR PROTEIN RSTB"/>
    <property type="match status" value="1"/>
</dbReference>
<dbReference type="Pfam" id="PF25323">
    <property type="entry name" value="6TM_PilS"/>
    <property type="match status" value="1"/>
</dbReference>
<dbReference type="Pfam" id="PF02518">
    <property type="entry name" value="HATPase_c"/>
    <property type="match status" value="1"/>
</dbReference>
<dbReference type="Pfam" id="PF00512">
    <property type="entry name" value="HisKA"/>
    <property type="match status" value="1"/>
</dbReference>
<dbReference type="PRINTS" id="PR00344">
    <property type="entry name" value="BCTRLSENSOR"/>
</dbReference>
<dbReference type="SMART" id="SM00387">
    <property type="entry name" value="HATPase_c"/>
    <property type="match status" value="1"/>
</dbReference>
<dbReference type="SMART" id="SM00388">
    <property type="entry name" value="HisKA"/>
    <property type="match status" value="1"/>
</dbReference>
<dbReference type="SUPFAM" id="SSF55874">
    <property type="entry name" value="ATPase domain of HSP90 chaperone/DNA topoisomerase II/histidine kinase"/>
    <property type="match status" value="1"/>
</dbReference>
<dbReference type="SUPFAM" id="SSF47384">
    <property type="entry name" value="Homodimeric domain of signal transducing histidine kinase"/>
    <property type="match status" value="1"/>
</dbReference>
<dbReference type="PROSITE" id="PS50109">
    <property type="entry name" value="HIS_KIN"/>
    <property type="match status" value="1"/>
</dbReference>
<keyword id="KW-0067">ATP-binding</keyword>
<keyword id="KW-0997">Cell inner membrane</keyword>
<keyword id="KW-1003">Cell membrane</keyword>
<keyword id="KW-0418">Kinase</keyword>
<keyword id="KW-0472">Membrane</keyword>
<keyword id="KW-0547">Nucleotide-binding</keyword>
<keyword id="KW-0597">Phosphoprotein</keyword>
<keyword id="KW-1185">Reference proteome</keyword>
<keyword id="KW-0808">Transferase</keyword>
<keyword id="KW-0812">Transmembrane</keyword>
<keyword id="KW-1133">Transmembrane helix</keyword>
<keyword id="KW-0902">Two-component regulatory system</keyword>
<organism>
    <name type="scientific">Cereibacter sphaeroides (strain ATCC 17023 / DSM 158 / JCM 6121 / CCUG 31486 / LMG 2827 / NBRC 12203 / NCIMB 8253 / ATH 2.4.1.)</name>
    <name type="common">Rhodobacter sphaeroides</name>
    <dbReference type="NCBI Taxonomy" id="272943"/>
    <lineage>
        <taxon>Bacteria</taxon>
        <taxon>Pseudomonadati</taxon>
        <taxon>Pseudomonadota</taxon>
        <taxon>Alphaproteobacteria</taxon>
        <taxon>Rhodobacterales</taxon>
        <taxon>Paracoccaceae</taxon>
        <taxon>Cereibacter</taxon>
    </lineage>
</organism>
<comment type="function">
    <text evidence="3">Member of the two-component regulatory system RegB/RegA. Involved in the positive regulation of photosynthesis gene expression in response to anaerobiosis. Also involved in positive regulation of the cbbI and cbbII Calvin cycle CO2 fixation operons, as well as in regulation of expression of genes involved in alternative CO2 fixation pathways. Phosphorylates RegA/PrrA.</text>
</comment>
<comment type="catalytic activity">
    <reaction>
        <text>ATP + protein L-histidine = ADP + protein N-phospho-L-histidine.</text>
        <dbReference type="EC" id="2.7.13.3"/>
    </reaction>
</comment>
<comment type="subcellular location">
    <subcellularLocation>
        <location evidence="2">Cell inner membrane</location>
        <topology evidence="2">Multi-pass membrane protein</topology>
    </subcellularLocation>
</comment>
<sequence length="462" mass="51033">MILGPDGILNRDTRGDWVRLRTLILLRWMAVAGQLAAIVVTDWYLGVRLPMGLCFMAVGASVIANVIATFVFPQNRRLTEFQALMILLFDLTQLSFLLFLTGGLTNPFALLILAPVTISALALELRTTVILGAIAIGLLTFTAYFHLPLILADGSSLSVPRMFEFGFWLAIVIGILFLGLYSRRVAIEIRSMSDALLATQMALDREQKLTDLGGVVAAAAHELGTPLATIKLVSSELAEELSEQPALRDDAELIREQADRCRDILRSMGRAGKDDLQMRQAPLGEVLREAAEPHVGRGKRVEFDLYPSRGGDERQPVILRRPEVIHGLRNLIQNAVDFARSTVWIDGEWTGDRIAIRIVDDGEGYPPAIIGRIGDPFVRQRRAEESQSRRPGYEGMGLGLFIAKTLLERSGAELSFANAADPFLRSHERPERCGAIVEVIWPVDRLVVVRNAPLGENVLIQT</sequence>
<feature type="chain" id="PRO_0000074860" description="Sensor histidine kinase RegB">
    <location>
        <begin position="1"/>
        <end position="462"/>
    </location>
</feature>
<feature type="topological domain" description="Cytoplasmic" evidence="5">
    <location>
        <begin position="1"/>
        <end position="25"/>
    </location>
</feature>
<feature type="transmembrane region" description="Helical" evidence="4">
    <location>
        <begin position="26"/>
        <end position="45"/>
    </location>
</feature>
<feature type="topological domain" description="Extracellular" evidence="5">
    <location>
        <begin position="46"/>
        <end position="51"/>
    </location>
</feature>
<feature type="transmembrane region" description="Helical" evidence="4">
    <location>
        <begin position="52"/>
        <end position="70"/>
    </location>
</feature>
<feature type="topological domain" description="Cytoplasmic" evidence="5">
    <location>
        <begin position="71"/>
        <end position="78"/>
    </location>
</feature>
<feature type="transmembrane region" description="Helical" evidence="4">
    <location>
        <begin position="79"/>
        <end position="96"/>
    </location>
</feature>
<feature type="topological domain" description="Extracellular" evidence="5">
    <location>
        <begin position="97"/>
        <end position="103"/>
    </location>
</feature>
<feature type="transmembrane region" description="Helical" evidence="4">
    <location>
        <begin position="104"/>
        <end position="123"/>
    </location>
</feature>
<feature type="topological domain" description="Cytoplasmic" evidence="5">
    <location>
        <begin position="124"/>
        <end position="129"/>
    </location>
</feature>
<feature type="transmembrane region" description="Helical" evidence="4">
    <location>
        <begin position="130"/>
        <end position="149"/>
    </location>
</feature>
<feature type="topological domain" description="Extracellular" evidence="5">
    <location>
        <begin position="150"/>
        <end position="164"/>
    </location>
</feature>
<feature type="transmembrane region" description="Helical" evidence="4">
    <location>
        <begin position="165"/>
        <end position="182"/>
    </location>
</feature>
<feature type="topological domain" description="Cytoplasmic" evidence="5">
    <location>
        <begin position="183"/>
        <end position="462"/>
    </location>
</feature>
<feature type="domain" description="Histidine kinase" evidence="1">
    <location>
        <begin position="218"/>
        <end position="445"/>
    </location>
</feature>
<feature type="modified residue" description="Phosphohistidine; by autocatalysis" evidence="1">
    <location>
        <position position="221"/>
    </location>
</feature>
<protein>
    <recommendedName>
        <fullName>Sensor histidine kinase RegB</fullName>
        <ecNumber>2.7.13.3</ecNumber>
    </recommendedName>
    <alternativeName>
        <fullName>Protein PrrB</fullName>
    </alternativeName>
</protein>
<accession>Q3J6C1</accession>
<accession>Q53068</accession>
<accession>Q53070</accession>
<name>REGB_CERS4</name>
<evidence type="ECO:0000255" key="1">
    <source>
        <dbReference type="PROSITE-ProRule" id="PRU00107"/>
    </source>
</evidence>
<evidence type="ECO:0000269" key="2">
    <source>
    </source>
</evidence>
<evidence type="ECO:0000269" key="3">
    <source>
    </source>
</evidence>
<evidence type="ECO:0000305" key="4"/>
<evidence type="ECO:0000305" key="5">
    <source>
    </source>
</evidence>
<reference key="1">
    <citation type="journal article" date="1995" name="J. Bacteriol.">
        <title>Oxygen-insensitive synthesis of the photosynthetic membranes of Rhodobacter sphaeroides: a mutant histidine kinase.</title>
        <authorList>
            <person name="Eraso J.M."/>
            <person name="Kaplan S."/>
        </authorList>
    </citation>
    <scope>NUCLEOTIDE SEQUENCE [GENOMIC DNA]</scope>
    <scope>FUNCTION</scope>
</reference>
<reference key="2">
    <citation type="submission" date="2005-09" db="EMBL/GenBank/DDBJ databases">
        <title>Complete sequence of chromosome 1 of Rhodobacter sphaeroides 2.4.1.</title>
        <authorList>
            <person name="Copeland A."/>
            <person name="Lucas S."/>
            <person name="Lapidus A."/>
            <person name="Barry K."/>
            <person name="Detter J.C."/>
            <person name="Glavina T."/>
            <person name="Hammon N."/>
            <person name="Israni S."/>
            <person name="Pitluck S."/>
            <person name="Richardson P."/>
            <person name="Mackenzie C."/>
            <person name="Choudhary M."/>
            <person name="Larimer F."/>
            <person name="Hauser L.J."/>
            <person name="Land M."/>
            <person name="Donohue T.J."/>
            <person name="Kaplan S."/>
        </authorList>
    </citation>
    <scope>NUCLEOTIDE SEQUENCE [LARGE SCALE GENOMIC DNA]</scope>
    <source>
        <strain>ATCC 17023 / DSM 158 / JCM 6121 / CCUG 31486 / LMG 2827 / NBRC 12203 / NCIMB 8253 / ATH 2.4.1.</strain>
    </source>
</reference>
<reference key="3">
    <citation type="journal article" date="1999" name="J. Biol. Chem.">
        <title>Topological analysis of the membrane-localized redox-responsive sensor kinase PrrB from Rhodobacter sphaeroides 2.4.1.</title>
        <authorList>
            <person name="Ouchane S."/>
            <person name="Kaplan S."/>
        </authorList>
    </citation>
    <scope>SUBCELLULAR LOCATION</scope>
    <scope>TOPOLOGY</scope>
</reference>
<proteinExistence type="evidence at protein level"/>